<keyword id="KW-0539">Nucleus</keyword>
<keyword id="KW-1185">Reference proteome</keyword>
<keyword id="KW-0804">Transcription</keyword>
<keyword id="KW-0805">Transcription regulation</keyword>
<protein>
    <recommendedName>
        <fullName>Transcriptional adapter 1</fullName>
    </recommendedName>
    <alternativeName>
        <fullName>Transcriptional adapter 1-like protein</fullName>
    </alternativeName>
</protein>
<comment type="function">
    <text>Probably involved in transcriptional regulation.</text>
</comment>
<comment type="subcellular location">
    <subcellularLocation>
        <location evidence="1">Nucleus</location>
    </subcellularLocation>
</comment>
<comment type="similarity">
    <text evidence="2">Belongs to the TADA1 family.</text>
</comment>
<name>TADA1_XENTR</name>
<feature type="chain" id="PRO_0000316021" description="Transcriptional adapter 1">
    <location>
        <begin position="1"/>
        <end position="331"/>
    </location>
</feature>
<reference key="1">
    <citation type="submission" date="2006-10" db="EMBL/GenBank/DDBJ databases">
        <authorList>
            <consortium name="Sanger Xenopus tropicalis EST/cDNA project"/>
        </authorList>
    </citation>
    <scope>NUCLEOTIDE SEQUENCE [LARGE SCALE MRNA]</scope>
    <source>
        <tissue>Neurula</tissue>
    </source>
</reference>
<reference key="2">
    <citation type="submission" date="2004-07" db="EMBL/GenBank/DDBJ databases">
        <authorList>
            <consortium name="NIH - Xenopus Gene Collection (XGC) project"/>
        </authorList>
    </citation>
    <scope>NUCLEOTIDE SEQUENCE [LARGE SCALE MRNA]</scope>
    <source>
        <tissue>Embryo</tissue>
    </source>
</reference>
<gene>
    <name type="primary">tada1</name>
    <name type="synonym">tada1l</name>
    <name type="ORF">TNeu035k14.1</name>
</gene>
<accession>Q6DEW4</accession>
<sequence>MATFISELEAAKKSLSEALGENVKQYWANLKLWFKQKISKEEFDIEARRLLTQENVHSHNDFLLAILTRCQILISAPEGTGSLNSATKPGKPKGKKKISSVRQKFDHRFQAQNPLAGAQQFVSRDPQEDDELKLCSHTMSLPTRGQLEGRMIVTAFEHGLDNVTEEAVTIVTCALEKHLKDLLTSVVSRRKAYRLKDGHFRYAFGCNVNPQPYLRNSVAAYNQLIECPPVFSSPTGAPNSGSYIHPDDAEQQAALLLACSGDNLTASLPPVNMYDLLEGLQVHREAIPSHTVYALNMERILMKLWHPNTEELQQDEIHRQRLAAKDGLLLC</sequence>
<evidence type="ECO:0000250" key="1"/>
<evidence type="ECO:0000305" key="2"/>
<proteinExistence type="evidence at transcript level"/>
<organism>
    <name type="scientific">Xenopus tropicalis</name>
    <name type="common">Western clawed frog</name>
    <name type="synonym">Silurana tropicalis</name>
    <dbReference type="NCBI Taxonomy" id="8364"/>
    <lineage>
        <taxon>Eukaryota</taxon>
        <taxon>Metazoa</taxon>
        <taxon>Chordata</taxon>
        <taxon>Craniata</taxon>
        <taxon>Vertebrata</taxon>
        <taxon>Euteleostomi</taxon>
        <taxon>Amphibia</taxon>
        <taxon>Batrachia</taxon>
        <taxon>Anura</taxon>
        <taxon>Pipoidea</taxon>
        <taxon>Pipidae</taxon>
        <taxon>Xenopodinae</taxon>
        <taxon>Xenopus</taxon>
        <taxon>Silurana</taxon>
    </lineage>
</organism>
<dbReference type="EMBL" id="CR760219">
    <property type="protein sequence ID" value="CAL49418.1"/>
    <property type="molecule type" value="mRNA"/>
</dbReference>
<dbReference type="EMBL" id="BC076979">
    <property type="protein sequence ID" value="AAH76979.1"/>
    <property type="molecule type" value="mRNA"/>
</dbReference>
<dbReference type="RefSeq" id="NP_001005070.1">
    <property type="nucleotide sequence ID" value="NM_001005070.1"/>
</dbReference>
<dbReference type="RefSeq" id="XP_017948491.1">
    <property type="nucleotide sequence ID" value="XM_018093002.1"/>
</dbReference>
<dbReference type="SMR" id="Q6DEW4"/>
<dbReference type="FunCoup" id="Q6DEW4">
    <property type="interactions" value="2777"/>
</dbReference>
<dbReference type="STRING" id="8364.ENSXETP00000012785"/>
<dbReference type="PaxDb" id="8364-ENSXETP00000001136"/>
<dbReference type="DNASU" id="448637"/>
<dbReference type="GeneID" id="448637"/>
<dbReference type="KEGG" id="xtr:448637"/>
<dbReference type="AGR" id="Xenbase:XB-GENE-951719"/>
<dbReference type="CTD" id="117143"/>
<dbReference type="Xenbase" id="XB-GENE-951719">
    <property type="gene designation" value="tada1"/>
</dbReference>
<dbReference type="eggNOG" id="ENOG502QRMT">
    <property type="taxonomic scope" value="Eukaryota"/>
</dbReference>
<dbReference type="HOGENOM" id="CLU_071612_0_0_1"/>
<dbReference type="InParanoid" id="Q6DEW4"/>
<dbReference type="OMA" id="NIMTEDQ"/>
<dbReference type="OrthoDB" id="10264870at2759"/>
<dbReference type="PhylomeDB" id="Q6DEW4"/>
<dbReference type="TreeFam" id="TF324330"/>
<dbReference type="Proteomes" id="UP000008143">
    <property type="component" value="Chromosome 4"/>
</dbReference>
<dbReference type="Bgee" id="ENSXETG00000000526">
    <property type="expression patterns" value="Expressed in testis and 12 other cell types or tissues"/>
</dbReference>
<dbReference type="GO" id="GO:0005634">
    <property type="term" value="C:nucleus"/>
    <property type="evidence" value="ECO:0007669"/>
    <property type="project" value="UniProtKB-SubCell"/>
</dbReference>
<dbReference type="GO" id="GO:0070461">
    <property type="term" value="C:SAGA-type complex"/>
    <property type="evidence" value="ECO:0007669"/>
    <property type="project" value="InterPro"/>
</dbReference>
<dbReference type="CDD" id="cd22934">
    <property type="entry name" value="HFD_TADA1"/>
    <property type="match status" value="1"/>
</dbReference>
<dbReference type="InterPro" id="IPR024738">
    <property type="entry name" value="Hfi1/Tada1"/>
</dbReference>
<dbReference type="PANTHER" id="PTHR21277">
    <property type="entry name" value="TRANSCRIPTIONAL ADAPTER 1"/>
    <property type="match status" value="1"/>
</dbReference>
<dbReference type="PANTHER" id="PTHR21277:SF5">
    <property type="entry name" value="TRANSCRIPTIONAL ADAPTER 1"/>
    <property type="match status" value="1"/>
</dbReference>
<dbReference type="Pfam" id="PF12767">
    <property type="entry name" value="SAGA-Tad1"/>
    <property type="match status" value="2"/>
</dbReference>